<proteinExistence type="evidence at protein level"/>
<protein>
    <recommendedName>
        <fullName evidence="1">Thiamine-phosphate synthase</fullName>
        <shortName evidence="1">TP synthase</shortName>
        <shortName evidence="1">TPS</shortName>
        <ecNumber evidence="1">2.5.1.3</ecNumber>
    </recommendedName>
    <alternativeName>
        <fullName evidence="1">Thiamine-phosphate pyrophosphorylase</fullName>
        <shortName evidence="1">TMP pyrophosphorylase</shortName>
        <shortName evidence="1">TMP-PPase</shortName>
    </alternativeName>
</protein>
<sequence length="207" mass="22590">MNLRNKLKLYVITDRRLKPEVESVREALEGGATAIQMRIKNAPTREMYEIGKTLRQLTREYDALFFVDDRVDVALAVDADGVQLGPEDMPIEVAKEIAPNLIIGASVYSLEEALEAEKKGADYLGAGSVFPTKTKEDARVIGLEGLRKIVESVKIPVVAIGGINKDNAREVLKTGVDGIAVISAVMGAEDVRKATEELRKIVEEVLG</sequence>
<dbReference type="EC" id="2.5.1.3" evidence="1"/>
<dbReference type="EMBL" id="AE009950">
    <property type="protein sequence ID" value="AAL81458.1"/>
    <property type="molecule type" value="Genomic_DNA"/>
</dbReference>
<dbReference type="RefSeq" id="WP_011012480.1">
    <property type="nucleotide sequence ID" value="NZ_CP023154.1"/>
</dbReference>
<dbReference type="PDB" id="1XI3">
    <property type="method" value="X-ray"/>
    <property type="resolution" value="1.70 A"/>
    <property type="chains" value="A/B=2-207"/>
</dbReference>
<dbReference type="PDBsum" id="1XI3"/>
<dbReference type="SMR" id="Q8U192"/>
<dbReference type="STRING" id="186497.PF1334"/>
<dbReference type="PaxDb" id="186497-PF1334"/>
<dbReference type="GeneID" id="41713137"/>
<dbReference type="KEGG" id="pfu:PF1334"/>
<dbReference type="PATRIC" id="fig|186497.12.peg.1397"/>
<dbReference type="eggNOG" id="arCOG01089">
    <property type="taxonomic scope" value="Archaea"/>
</dbReference>
<dbReference type="HOGENOM" id="CLU_018272_3_2_2"/>
<dbReference type="OrthoDB" id="85572at2157"/>
<dbReference type="PhylomeDB" id="Q8U192"/>
<dbReference type="UniPathway" id="UPA00060">
    <property type="reaction ID" value="UER00141"/>
</dbReference>
<dbReference type="EvolutionaryTrace" id="Q8U192"/>
<dbReference type="Proteomes" id="UP000001013">
    <property type="component" value="Chromosome"/>
</dbReference>
<dbReference type="GO" id="GO:0005737">
    <property type="term" value="C:cytoplasm"/>
    <property type="evidence" value="ECO:0007669"/>
    <property type="project" value="TreeGrafter"/>
</dbReference>
<dbReference type="GO" id="GO:0000287">
    <property type="term" value="F:magnesium ion binding"/>
    <property type="evidence" value="ECO:0007669"/>
    <property type="project" value="UniProtKB-UniRule"/>
</dbReference>
<dbReference type="GO" id="GO:0004789">
    <property type="term" value="F:thiamine-phosphate diphosphorylase activity"/>
    <property type="evidence" value="ECO:0007669"/>
    <property type="project" value="UniProtKB-UniRule"/>
</dbReference>
<dbReference type="GO" id="GO:0009228">
    <property type="term" value="P:thiamine biosynthetic process"/>
    <property type="evidence" value="ECO:0007669"/>
    <property type="project" value="UniProtKB-KW"/>
</dbReference>
<dbReference type="GO" id="GO:0009229">
    <property type="term" value="P:thiamine diphosphate biosynthetic process"/>
    <property type="evidence" value="ECO:0007669"/>
    <property type="project" value="UniProtKB-UniRule"/>
</dbReference>
<dbReference type="CDD" id="cd00564">
    <property type="entry name" value="TMP_TenI"/>
    <property type="match status" value="1"/>
</dbReference>
<dbReference type="FunFam" id="3.20.20.70:FF:000096">
    <property type="entry name" value="Thiamine-phosphate synthase"/>
    <property type="match status" value="1"/>
</dbReference>
<dbReference type="Gene3D" id="3.20.20.70">
    <property type="entry name" value="Aldolase class I"/>
    <property type="match status" value="1"/>
</dbReference>
<dbReference type="HAMAP" id="MF_00097">
    <property type="entry name" value="TMP_synthase"/>
    <property type="match status" value="1"/>
</dbReference>
<dbReference type="InterPro" id="IPR013785">
    <property type="entry name" value="Aldolase_TIM"/>
</dbReference>
<dbReference type="InterPro" id="IPR036206">
    <property type="entry name" value="ThiamineP_synth_sf"/>
</dbReference>
<dbReference type="InterPro" id="IPR022998">
    <property type="entry name" value="ThiamineP_synth_TenI"/>
</dbReference>
<dbReference type="InterPro" id="IPR034291">
    <property type="entry name" value="TMP_synthase"/>
</dbReference>
<dbReference type="NCBIfam" id="TIGR00693">
    <property type="entry name" value="thiE"/>
    <property type="match status" value="1"/>
</dbReference>
<dbReference type="PANTHER" id="PTHR20857:SF23">
    <property type="entry name" value="THIAMINE BIOSYNTHETIC BIFUNCTIONAL ENZYME"/>
    <property type="match status" value="1"/>
</dbReference>
<dbReference type="PANTHER" id="PTHR20857">
    <property type="entry name" value="THIAMINE-PHOSPHATE PYROPHOSPHORYLASE"/>
    <property type="match status" value="1"/>
</dbReference>
<dbReference type="Pfam" id="PF02581">
    <property type="entry name" value="TMP-TENI"/>
    <property type="match status" value="1"/>
</dbReference>
<dbReference type="SUPFAM" id="SSF51391">
    <property type="entry name" value="Thiamin phosphate synthase"/>
    <property type="match status" value="1"/>
</dbReference>
<feature type="chain" id="PRO_0000157074" description="Thiamine-phosphate synthase">
    <location>
        <begin position="1"/>
        <end position="207"/>
    </location>
</feature>
<feature type="binding site" evidence="1">
    <location>
        <begin position="36"/>
        <end position="40"/>
    </location>
    <ligand>
        <name>4-amino-2-methyl-5-(diphosphooxymethyl)pyrimidine</name>
        <dbReference type="ChEBI" id="CHEBI:57841"/>
    </ligand>
</feature>
<feature type="binding site" evidence="1">
    <location>
        <position position="68"/>
    </location>
    <ligand>
        <name>4-amino-2-methyl-5-(diphosphooxymethyl)pyrimidine</name>
        <dbReference type="ChEBI" id="CHEBI:57841"/>
    </ligand>
</feature>
<feature type="binding site" evidence="1">
    <location>
        <position position="69"/>
    </location>
    <ligand>
        <name>Mg(2+)</name>
        <dbReference type="ChEBI" id="CHEBI:18420"/>
    </ligand>
</feature>
<feature type="binding site" evidence="1">
    <location>
        <position position="88"/>
    </location>
    <ligand>
        <name>Mg(2+)</name>
        <dbReference type="ChEBI" id="CHEBI:18420"/>
    </ligand>
</feature>
<feature type="binding site" evidence="1">
    <location>
        <position position="106"/>
    </location>
    <ligand>
        <name>4-amino-2-methyl-5-(diphosphooxymethyl)pyrimidine</name>
        <dbReference type="ChEBI" id="CHEBI:57841"/>
    </ligand>
</feature>
<feature type="binding site" evidence="1">
    <location>
        <begin position="132"/>
        <end position="134"/>
    </location>
    <ligand>
        <name>2-[(2R,5Z)-2-carboxy-4-methylthiazol-5(2H)-ylidene]ethyl phosphate</name>
        <dbReference type="ChEBI" id="CHEBI:62899"/>
    </ligand>
</feature>
<feature type="binding site" evidence="1">
    <location>
        <position position="135"/>
    </location>
    <ligand>
        <name>4-amino-2-methyl-5-(diphosphooxymethyl)pyrimidine</name>
        <dbReference type="ChEBI" id="CHEBI:57841"/>
    </ligand>
</feature>
<feature type="binding site" evidence="1">
    <location>
        <position position="162"/>
    </location>
    <ligand>
        <name>2-[(2R,5Z)-2-carboxy-4-methylthiazol-5(2H)-ylidene]ethyl phosphate</name>
        <dbReference type="ChEBI" id="CHEBI:62899"/>
    </ligand>
</feature>
<feature type="binding site" evidence="1">
    <location>
        <begin position="182"/>
        <end position="183"/>
    </location>
    <ligand>
        <name>2-[(2R,5Z)-2-carboxy-4-methylthiazol-5(2H)-ylidene]ethyl phosphate</name>
        <dbReference type="ChEBI" id="CHEBI:62899"/>
    </ligand>
</feature>
<feature type="helix" evidence="2">
    <location>
        <begin position="3"/>
        <end position="6"/>
    </location>
</feature>
<feature type="strand" evidence="2">
    <location>
        <begin position="8"/>
        <end position="12"/>
    </location>
</feature>
<feature type="turn" evidence="2">
    <location>
        <begin position="15"/>
        <end position="17"/>
    </location>
</feature>
<feature type="helix" evidence="2">
    <location>
        <begin position="20"/>
        <end position="29"/>
    </location>
</feature>
<feature type="strand" evidence="2">
    <location>
        <begin position="33"/>
        <end position="37"/>
    </location>
</feature>
<feature type="helix" evidence="2">
    <location>
        <begin position="44"/>
        <end position="60"/>
    </location>
</feature>
<feature type="strand" evidence="2">
    <location>
        <begin position="64"/>
        <end position="69"/>
    </location>
</feature>
<feature type="helix" evidence="2">
    <location>
        <begin position="71"/>
        <end position="77"/>
    </location>
</feature>
<feature type="strand" evidence="2">
    <location>
        <begin position="80"/>
        <end position="84"/>
    </location>
</feature>
<feature type="helix" evidence="2">
    <location>
        <begin position="91"/>
        <end position="97"/>
    </location>
</feature>
<feature type="strand" evidence="2">
    <location>
        <begin position="101"/>
        <end position="109"/>
    </location>
</feature>
<feature type="helix" evidence="2">
    <location>
        <begin position="110"/>
        <end position="119"/>
    </location>
</feature>
<feature type="strand" evidence="2">
    <location>
        <begin position="122"/>
        <end position="127"/>
    </location>
</feature>
<feature type="helix" evidence="2">
    <location>
        <begin position="142"/>
        <end position="152"/>
    </location>
</feature>
<feature type="strand" evidence="2">
    <location>
        <begin position="157"/>
        <end position="162"/>
    </location>
</feature>
<feature type="turn" evidence="2">
    <location>
        <begin position="165"/>
        <end position="167"/>
    </location>
</feature>
<feature type="helix" evidence="2">
    <location>
        <begin position="168"/>
        <end position="172"/>
    </location>
</feature>
<feature type="turn" evidence="2">
    <location>
        <begin position="173"/>
        <end position="175"/>
    </location>
</feature>
<feature type="strand" evidence="2">
    <location>
        <begin position="177"/>
        <end position="182"/>
    </location>
</feature>
<feature type="helix" evidence="2">
    <location>
        <begin position="183"/>
        <end position="186"/>
    </location>
</feature>
<feature type="strand" evidence="2">
    <location>
        <begin position="188"/>
        <end position="190"/>
    </location>
</feature>
<feature type="helix" evidence="2">
    <location>
        <begin position="191"/>
        <end position="206"/>
    </location>
</feature>
<organism>
    <name type="scientific">Pyrococcus furiosus (strain ATCC 43587 / DSM 3638 / JCM 8422 / Vc1)</name>
    <dbReference type="NCBI Taxonomy" id="186497"/>
    <lineage>
        <taxon>Archaea</taxon>
        <taxon>Methanobacteriati</taxon>
        <taxon>Methanobacteriota</taxon>
        <taxon>Thermococci</taxon>
        <taxon>Thermococcales</taxon>
        <taxon>Thermococcaceae</taxon>
        <taxon>Pyrococcus</taxon>
    </lineage>
</organism>
<keyword id="KW-0002">3D-structure</keyword>
<keyword id="KW-0460">Magnesium</keyword>
<keyword id="KW-0479">Metal-binding</keyword>
<keyword id="KW-1185">Reference proteome</keyword>
<keyword id="KW-0784">Thiamine biosynthesis</keyword>
<keyword id="KW-0808">Transferase</keyword>
<reference key="1">
    <citation type="journal article" date="1999" name="Genetics">
        <title>Divergence of the hyperthermophilic archaea Pyrococcus furiosus and P. horikoshii inferred from complete genomic sequences.</title>
        <authorList>
            <person name="Maeder D.L."/>
            <person name="Weiss R.B."/>
            <person name="Dunn D.M."/>
            <person name="Cherry J.L."/>
            <person name="Gonzalez J.M."/>
            <person name="DiRuggiero J."/>
            <person name="Robb F.T."/>
        </authorList>
    </citation>
    <scope>NUCLEOTIDE SEQUENCE [LARGE SCALE GENOMIC DNA]</scope>
    <source>
        <strain>ATCC 43587 / DSM 3638 / JCM 8422 / Vc1</strain>
    </source>
</reference>
<name>THIE_PYRFU</name>
<comment type="function">
    <text evidence="1">Condenses 4-methyl-5-(beta-hydroxyethyl)thiazole monophosphate (THZ-P) and 2-methyl-4-amino-5-hydroxymethyl pyrimidine pyrophosphate (HMP-PP) to form thiamine monophosphate (TMP).</text>
</comment>
<comment type="catalytic activity">
    <reaction evidence="1">
        <text>2-[(2R,5Z)-2-carboxy-4-methylthiazol-5(2H)-ylidene]ethyl phosphate + 4-amino-2-methyl-5-(diphosphooxymethyl)pyrimidine + 2 H(+) = thiamine phosphate + CO2 + diphosphate</text>
        <dbReference type="Rhea" id="RHEA:47844"/>
        <dbReference type="ChEBI" id="CHEBI:15378"/>
        <dbReference type="ChEBI" id="CHEBI:16526"/>
        <dbReference type="ChEBI" id="CHEBI:33019"/>
        <dbReference type="ChEBI" id="CHEBI:37575"/>
        <dbReference type="ChEBI" id="CHEBI:57841"/>
        <dbReference type="ChEBI" id="CHEBI:62899"/>
        <dbReference type="EC" id="2.5.1.3"/>
    </reaction>
</comment>
<comment type="catalytic activity">
    <reaction evidence="1">
        <text>2-(2-carboxy-4-methylthiazol-5-yl)ethyl phosphate + 4-amino-2-methyl-5-(diphosphooxymethyl)pyrimidine + 2 H(+) = thiamine phosphate + CO2 + diphosphate</text>
        <dbReference type="Rhea" id="RHEA:47848"/>
        <dbReference type="ChEBI" id="CHEBI:15378"/>
        <dbReference type="ChEBI" id="CHEBI:16526"/>
        <dbReference type="ChEBI" id="CHEBI:33019"/>
        <dbReference type="ChEBI" id="CHEBI:37575"/>
        <dbReference type="ChEBI" id="CHEBI:57841"/>
        <dbReference type="ChEBI" id="CHEBI:62890"/>
        <dbReference type="EC" id="2.5.1.3"/>
    </reaction>
</comment>
<comment type="catalytic activity">
    <reaction evidence="1">
        <text>4-methyl-5-(2-phosphooxyethyl)-thiazole + 4-amino-2-methyl-5-(diphosphooxymethyl)pyrimidine + H(+) = thiamine phosphate + diphosphate</text>
        <dbReference type="Rhea" id="RHEA:22328"/>
        <dbReference type="ChEBI" id="CHEBI:15378"/>
        <dbReference type="ChEBI" id="CHEBI:33019"/>
        <dbReference type="ChEBI" id="CHEBI:37575"/>
        <dbReference type="ChEBI" id="CHEBI:57841"/>
        <dbReference type="ChEBI" id="CHEBI:58296"/>
        <dbReference type="EC" id="2.5.1.3"/>
    </reaction>
</comment>
<comment type="cofactor">
    <cofactor evidence="1">
        <name>Mg(2+)</name>
        <dbReference type="ChEBI" id="CHEBI:18420"/>
    </cofactor>
    <text evidence="1">Binds 1 Mg(2+) ion per subunit.</text>
</comment>
<comment type="pathway">
    <text evidence="1">Cofactor biosynthesis; thiamine diphosphate biosynthesis; thiamine phosphate from 4-amino-2-methyl-5-diphosphomethylpyrimidine and 4-methyl-5-(2-phosphoethyl)-thiazole: step 1/1.</text>
</comment>
<comment type="similarity">
    <text evidence="1">Belongs to the thiamine-phosphate synthase family.</text>
</comment>
<gene>
    <name evidence="1" type="primary">thiE</name>
    <name type="ordered locus">PF1334</name>
</gene>
<accession>Q8U192</accession>
<evidence type="ECO:0000255" key="1">
    <source>
        <dbReference type="HAMAP-Rule" id="MF_00097"/>
    </source>
</evidence>
<evidence type="ECO:0007829" key="2">
    <source>
        <dbReference type="PDB" id="1XI3"/>
    </source>
</evidence>